<protein>
    <recommendedName>
        <fullName evidence="3">Small ribosomal subunit protein eS28A</fullName>
    </recommendedName>
    <alternativeName>
        <fullName>40S ribosomal protein S28-A</fullName>
    </alternativeName>
    <alternativeName>
        <fullName>S33</fullName>
    </alternativeName>
</protein>
<name>RS28A_SCHPO</name>
<comment type="function">
    <text evidence="1">Component of the ribosome, a large ribonucleoprotein complex responsible for the synthesis of proteins in the cell. The small ribosomal subunit (SSU) binds messenger RNAs (mRNAs) and translates the encoded message by selecting cognate aminoacyl-transfer RNA (tRNA) molecules. The large subunit (LSU) contains the ribosomal catalytic site termed the peptidyl transferase center (PTC), which catalyzes the formation of peptide bonds, thereby polymerizing the amino acids delivered by tRNAs into a polypeptide chain. The nascent polypeptides leave the ribosome through a tunnel in the LSU and interact with protein factors that function in enzymatic processing, targeting, and the membrane insertion of nascent chains at the exit of the ribosomal tunnel.</text>
</comment>
<comment type="subunit">
    <text evidence="1">Component of the small ribosomal subunit (SSU). Mature yeast ribosomes consist of a small (40S) and a large (60S) subunit. The 40S small subunit contains 1 molecule of ribosomal RNA (18S rRNA) and at least 33 different proteins. The large 60S subunit contains 3 rRNA molecules (25S, 5.8S and 5S rRNA) and at least 46 different proteins.</text>
</comment>
<comment type="subcellular location">
    <subcellularLocation>
        <location evidence="2">Cytoplasm</location>
    </subcellularLocation>
</comment>
<comment type="miscellaneous">
    <text>There are 2 genes for eS28 in S.pombe.</text>
</comment>
<comment type="similarity">
    <text evidence="3">Belongs to the eukaryotic ribosomal protein eS28 family.</text>
</comment>
<accession>P0CT79</accession>
<accession>Q10421</accession>
<sequence length="68" mass="7664">MDSSKVPVKLAKVIKVLGRTGSRGGVTQVRVEFMDDTSRSIIRNVKGPVREDDILVLLESEREARRLR</sequence>
<keyword id="KW-0002">3D-structure</keyword>
<keyword id="KW-0963">Cytoplasm</keyword>
<keyword id="KW-1185">Reference proteome</keyword>
<keyword id="KW-0687">Ribonucleoprotein</keyword>
<keyword id="KW-0689">Ribosomal protein</keyword>
<evidence type="ECO:0000250" key="1">
    <source>
        <dbReference type="UniProtKB" id="Q3E7X9"/>
    </source>
</evidence>
<evidence type="ECO:0000269" key="2">
    <source>
    </source>
</evidence>
<evidence type="ECO:0000305" key="3"/>
<reference key="1">
    <citation type="journal article" date="2002" name="Nature">
        <title>The genome sequence of Schizosaccharomyces pombe.</title>
        <authorList>
            <person name="Wood V."/>
            <person name="Gwilliam R."/>
            <person name="Rajandream M.A."/>
            <person name="Lyne M.H."/>
            <person name="Lyne R."/>
            <person name="Stewart A."/>
            <person name="Sgouros J.G."/>
            <person name="Peat N."/>
            <person name="Hayles J."/>
            <person name="Baker S.G."/>
            <person name="Basham D."/>
            <person name="Bowman S."/>
            <person name="Brooks K."/>
            <person name="Brown D."/>
            <person name="Brown S."/>
            <person name="Chillingworth T."/>
            <person name="Churcher C.M."/>
            <person name="Collins M."/>
            <person name="Connor R."/>
            <person name="Cronin A."/>
            <person name="Davis P."/>
            <person name="Feltwell T."/>
            <person name="Fraser A."/>
            <person name="Gentles S."/>
            <person name="Goble A."/>
            <person name="Hamlin N."/>
            <person name="Harris D.E."/>
            <person name="Hidalgo J."/>
            <person name="Hodgson G."/>
            <person name="Holroyd S."/>
            <person name="Hornsby T."/>
            <person name="Howarth S."/>
            <person name="Huckle E.J."/>
            <person name="Hunt S."/>
            <person name="Jagels K."/>
            <person name="James K.D."/>
            <person name="Jones L."/>
            <person name="Jones M."/>
            <person name="Leather S."/>
            <person name="McDonald S."/>
            <person name="McLean J."/>
            <person name="Mooney P."/>
            <person name="Moule S."/>
            <person name="Mungall K.L."/>
            <person name="Murphy L.D."/>
            <person name="Niblett D."/>
            <person name="Odell C."/>
            <person name="Oliver K."/>
            <person name="O'Neil S."/>
            <person name="Pearson D."/>
            <person name="Quail M.A."/>
            <person name="Rabbinowitsch E."/>
            <person name="Rutherford K.M."/>
            <person name="Rutter S."/>
            <person name="Saunders D."/>
            <person name="Seeger K."/>
            <person name="Sharp S."/>
            <person name="Skelton J."/>
            <person name="Simmonds M.N."/>
            <person name="Squares R."/>
            <person name="Squares S."/>
            <person name="Stevens K."/>
            <person name="Taylor K."/>
            <person name="Taylor R.G."/>
            <person name="Tivey A."/>
            <person name="Walsh S.V."/>
            <person name="Warren T."/>
            <person name="Whitehead S."/>
            <person name="Woodward J.R."/>
            <person name="Volckaert G."/>
            <person name="Aert R."/>
            <person name="Robben J."/>
            <person name="Grymonprez B."/>
            <person name="Weltjens I."/>
            <person name="Vanstreels E."/>
            <person name="Rieger M."/>
            <person name="Schaefer M."/>
            <person name="Mueller-Auer S."/>
            <person name="Gabel C."/>
            <person name="Fuchs M."/>
            <person name="Duesterhoeft A."/>
            <person name="Fritzc C."/>
            <person name="Holzer E."/>
            <person name="Moestl D."/>
            <person name="Hilbert H."/>
            <person name="Borzym K."/>
            <person name="Langer I."/>
            <person name="Beck A."/>
            <person name="Lehrach H."/>
            <person name="Reinhardt R."/>
            <person name="Pohl T.M."/>
            <person name="Eger P."/>
            <person name="Zimmermann W."/>
            <person name="Wedler H."/>
            <person name="Wambutt R."/>
            <person name="Purnelle B."/>
            <person name="Goffeau A."/>
            <person name="Cadieu E."/>
            <person name="Dreano S."/>
            <person name="Gloux S."/>
            <person name="Lelaure V."/>
            <person name="Mottier S."/>
            <person name="Galibert F."/>
            <person name="Aves S.J."/>
            <person name="Xiang Z."/>
            <person name="Hunt C."/>
            <person name="Moore K."/>
            <person name="Hurst S.M."/>
            <person name="Lucas M."/>
            <person name="Rochet M."/>
            <person name="Gaillardin C."/>
            <person name="Tallada V.A."/>
            <person name="Garzon A."/>
            <person name="Thode G."/>
            <person name="Daga R.R."/>
            <person name="Cruzado L."/>
            <person name="Jimenez J."/>
            <person name="Sanchez M."/>
            <person name="del Rey F."/>
            <person name="Benito J."/>
            <person name="Dominguez A."/>
            <person name="Revuelta J.L."/>
            <person name="Moreno S."/>
            <person name="Armstrong J."/>
            <person name="Forsburg S.L."/>
            <person name="Cerutti L."/>
            <person name="Lowe T."/>
            <person name="McCombie W.R."/>
            <person name="Paulsen I."/>
            <person name="Potashkin J."/>
            <person name="Shpakovski G.V."/>
            <person name="Ussery D."/>
            <person name="Barrell B.G."/>
            <person name="Nurse P."/>
        </authorList>
    </citation>
    <scope>NUCLEOTIDE SEQUENCE [LARGE SCALE GENOMIC DNA]</scope>
    <source>
        <strain>972 / ATCC 24843</strain>
    </source>
</reference>
<reference key="2">
    <citation type="journal article" date="2006" name="Nat. Biotechnol.">
        <title>ORFeome cloning and global analysis of protein localization in the fission yeast Schizosaccharomyces pombe.</title>
        <authorList>
            <person name="Matsuyama A."/>
            <person name="Arai R."/>
            <person name="Yashiroda Y."/>
            <person name="Shirai A."/>
            <person name="Kamata A."/>
            <person name="Sekido S."/>
            <person name="Kobayashi Y."/>
            <person name="Hashimoto A."/>
            <person name="Hamamoto M."/>
            <person name="Hiraoka Y."/>
            <person name="Horinouchi S."/>
            <person name="Yoshida M."/>
        </authorList>
    </citation>
    <scope>SUBCELLULAR LOCATION [LARGE SCALE ANALYSIS]</scope>
</reference>
<dbReference type="EMBL" id="CU329670">
    <property type="protein sequence ID" value="CAA94635.1"/>
    <property type="molecule type" value="Genomic_DNA"/>
</dbReference>
<dbReference type="PIR" id="T38377">
    <property type="entry name" value="T38377"/>
</dbReference>
<dbReference type="PIR" id="T45114">
    <property type="entry name" value="T45114"/>
</dbReference>
<dbReference type="RefSeq" id="NP_594526.1">
    <property type="nucleotide sequence ID" value="NM_001019955.2"/>
</dbReference>
<dbReference type="PDB" id="9AXT">
    <property type="method" value="EM"/>
    <property type="resolution" value="2.40 A"/>
    <property type="chains" value="Ai=1-68"/>
</dbReference>
<dbReference type="PDB" id="9AXV">
    <property type="method" value="EM"/>
    <property type="resolution" value="2.40 A"/>
    <property type="chains" value="Ai=1-68"/>
</dbReference>
<dbReference type="PDBsum" id="9AXT"/>
<dbReference type="PDBsum" id="9AXV"/>
<dbReference type="EMDB" id="EMD-43972"/>
<dbReference type="EMDB" id="EMD-43976"/>
<dbReference type="SMR" id="P0CT79"/>
<dbReference type="FunCoup" id="P0CT79">
    <property type="interactions" value="409"/>
</dbReference>
<dbReference type="STRING" id="284812.P0CT79"/>
<dbReference type="iPTMnet" id="P0CT79"/>
<dbReference type="PaxDb" id="4896-SPAC25G10.06.1"/>
<dbReference type="EnsemblFungi" id="SPAC25G10.06.1">
    <property type="protein sequence ID" value="SPAC25G10.06.1:pep"/>
    <property type="gene ID" value="SPAC25G10.06"/>
</dbReference>
<dbReference type="EnsemblFungi" id="SPCC285.15c.1">
    <property type="protein sequence ID" value="SPCC285.15c.1:pep"/>
    <property type="gene ID" value="SPCC285.15c"/>
</dbReference>
<dbReference type="GeneID" id="2542751"/>
<dbReference type="KEGG" id="spo:2539085"/>
<dbReference type="KEGG" id="spo:2542751"/>
<dbReference type="PomBase" id="SPAC25G10.06">
    <property type="gene designation" value="rps2801"/>
</dbReference>
<dbReference type="VEuPathDB" id="FungiDB:SPAC25G10.06"/>
<dbReference type="VEuPathDB" id="FungiDB:SPCC285.15c"/>
<dbReference type="eggNOG" id="KOG3502">
    <property type="taxonomic scope" value="Eukaryota"/>
</dbReference>
<dbReference type="InParanoid" id="P0CT79"/>
<dbReference type="OMA" id="NTGMHGE"/>
<dbReference type="PhylomeDB" id="P0CT79"/>
<dbReference type="Reactome" id="R-SPO-156827">
    <property type="pathway name" value="L13a-mediated translational silencing of Ceruloplasmin expression"/>
</dbReference>
<dbReference type="Reactome" id="R-SPO-1799339">
    <property type="pathway name" value="SRP-dependent cotranslational protein targeting to membrane"/>
</dbReference>
<dbReference type="Reactome" id="R-SPO-72649">
    <property type="pathway name" value="Translation initiation complex formation"/>
</dbReference>
<dbReference type="Reactome" id="R-SPO-72689">
    <property type="pathway name" value="Formation of a pool of free 40S subunits"/>
</dbReference>
<dbReference type="Reactome" id="R-SPO-72695">
    <property type="pathway name" value="Formation of the ternary complex, and subsequently, the 43S complex"/>
</dbReference>
<dbReference type="Reactome" id="R-SPO-72702">
    <property type="pathway name" value="Ribosomal scanning and start codon recognition"/>
</dbReference>
<dbReference type="Reactome" id="R-SPO-72706">
    <property type="pathway name" value="GTP hydrolysis and joining of the 60S ribosomal subunit"/>
</dbReference>
<dbReference type="Reactome" id="R-SPO-975956">
    <property type="pathway name" value="Nonsense Mediated Decay (NMD) independent of the Exon Junction Complex (EJC)"/>
</dbReference>
<dbReference type="Reactome" id="R-SPO-975957">
    <property type="pathway name" value="Nonsense Mediated Decay (NMD) enhanced by the Exon Junction Complex (EJC)"/>
</dbReference>
<dbReference type="PRO" id="PR:P0CT79"/>
<dbReference type="Proteomes" id="UP000002485">
    <property type="component" value="Chromosome I"/>
</dbReference>
<dbReference type="GO" id="GO:0005829">
    <property type="term" value="C:cytosol"/>
    <property type="evidence" value="ECO:0007005"/>
    <property type="project" value="PomBase"/>
</dbReference>
<dbReference type="GO" id="GO:0022627">
    <property type="term" value="C:cytosolic small ribosomal subunit"/>
    <property type="evidence" value="ECO:0000269"/>
    <property type="project" value="PomBase"/>
</dbReference>
<dbReference type="GO" id="GO:0003735">
    <property type="term" value="F:structural constituent of ribosome"/>
    <property type="evidence" value="ECO:0000318"/>
    <property type="project" value="GO_Central"/>
</dbReference>
<dbReference type="GO" id="GO:0002181">
    <property type="term" value="P:cytoplasmic translation"/>
    <property type="evidence" value="ECO:0000266"/>
    <property type="project" value="PomBase"/>
</dbReference>
<dbReference type="GO" id="GO:0030490">
    <property type="term" value="P:maturation of SSU-rRNA"/>
    <property type="evidence" value="ECO:0000318"/>
    <property type="project" value="GO_Central"/>
</dbReference>
<dbReference type="GO" id="GO:0000028">
    <property type="term" value="P:ribosomal small subunit assembly"/>
    <property type="evidence" value="ECO:0000318"/>
    <property type="project" value="GO_Central"/>
</dbReference>
<dbReference type="CDD" id="cd04457">
    <property type="entry name" value="S1_S28E"/>
    <property type="match status" value="1"/>
</dbReference>
<dbReference type="FunFam" id="2.40.50.140:FF:000025">
    <property type="entry name" value="40S ribosomal protein S28"/>
    <property type="match status" value="1"/>
</dbReference>
<dbReference type="Gene3D" id="2.40.50.140">
    <property type="entry name" value="Nucleic acid-binding proteins"/>
    <property type="match status" value="1"/>
</dbReference>
<dbReference type="HAMAP" id="MF_00292">
    <property type="entry name" value="Ribosomal_eS28"/>
    <property type="match status" value="1"/>
</dbReference>
<dbReference type="InterPro" id="IPR012340">
    <property type="entry name" value="NA-bd_OB-fold"/>
</dbReference>
<dbReference type="InterPro" id="IPR000289">
    <property type="entry name" value="Ribosomal_eS28"/>
</dbReference>
<dbReference type="InterPro" id="IPR028626">
    <property type="entry name" value="Ribosomal_eS28_CS"/>
</dbReference>
<dbReference type="PANTHER" id="PTHR10769">
    <property type="entry name" value="40S RIBOSOMAL PROTEIN S28"/>
    <property type="match status" value="1"/>
</dbReference>
<dbReference type="PANTHER" id="PTHR10769:SF3">
    <property type="entry name" value="SMALL RIBOSOMAL SUBUNIT PROTEIN ES28"/>
    <property type="match status" value="1"/>
</dbReference>
<dbReference type="Pfam" id="PF01200">
    <property type="entry name" value="Ribosomal_S28e"/>
    <property type="match status" value="1"/>
</dbReference>
<dbReference type="SUPFAM" id="SSF50249">
    <property type="entry name" value="Nucleic acid-binding proteins"/>
    <property type="match status" value="1"/>
</dbReference>
<dbReference type="PROSITE" id="PS00961">
    <property type="entry name" value="RIBOSOMAL_S28E"/>
    <property type="match status" value="1"/>
</dbReference>
<organism>
    <name type="scientific">Schizosaccharomyces pombe (strain 972 / ATCC 24843)</name>
    <name type="common">Fission yeast</name>
    <dbReference type="NCBI Taxonomy" id="284812"/>
    <lineage>
        <taxon>Eukaryota</taxon>
        <taxon>Fungi</taxon>
        <taxon>Dikarya</taxon>
        <taxon>Ascomycota</taxon>
        <taxon>Taphrinomycotina</taxon>
        <taxon>Schizosaccharomycetes</taxon>
        <taxon>Schizosaccharomycetales</taxon>
        <taxon>Schizosaccharomycetaceae</taxon>
        <taxon>Schizosaccharomyces</taxon>
    </lineage>
</organism>
<gene>
    <name type="primary">rps2801</name>
    <name type="synonym">rps28a</name>
    <name type="ORF">SPAC25G10.06</name>
</gene>
<proteinExistence type="evidence at protein level"/>
<feature type="chain" id="PRO_0000136841" description="Small ribosomal subunit protein eS28A">
    <location>
        <begin position="1"/>
        <end position="68"/>
    </location>
</feature>